<dbReference type="EC" id="5.3.1.16" evidence="1"/>
<dbReference type="EMBL" id="CP000926">
    <property type="protein sequence ID" value="ABY96230.1"/>
    <property type="molecule type" value="Genomic_DNA"/>
</dbReference>
<dbReference type="RefSeq" id="WP_012270094.1">
    <property type="nucleotide sequence ID" value="NC_010322.1"/>
</dbReference>
<dbReference type="SMR" id="B0KI44"/>
<dbReference type="KEGG" id="ppg:PputGB1_0317"/>
<dbReference type="eggNOG" id="COG0106">
    <property type="taxonomic scope" value="Bacteria"/>
</dbReference>
<dbReference type="HOGENOM" id="CLU_048577_1_1_6"/>
<dbReference type="UniPathway" id="UPA00031">
    <property type="reaction ID" value="UER00009"/>
</dbReference>
<dbReference type="Proteomes" id="UP000002157">
    <property type="component" value="Chromosome"/>
</dbReference>
<dbReference type="GO" id="GO:0005737">
    <property type="term" value="C:cytoplasm"/>
    <property type="evidence" value="ECO:0007669"/>
    <property type="project" value="UniProtKB-SubCell"/>
</dbReference>
<dbReference type="GO" id="GO:0003949">
    <property type="term" value="F:1-(5-phosphoribosyl)-5-[(5-phosphoribosylamino)methylideneamino]imidazole-4-carboxamide isomerase activity"/>
    <property type="evidence" value="ECO:0007669"/>
    <property type="project" value="UniProtKB-UniRule"/>
</dbReference>
<dbReference type="GO" id="GO:0000105">
    <property type="term" value="P:L-histidine biosynthetic process"/>
    <property type="evidence" value="ECO:0007669"/>
    <property type="project" value="UniProtKB-UniRule"/>
</dbReference>
<dbReference type="GO" id="GO:0000162">
    <property type="term" value="P:L-tryptophan biosynthetic process"/>
    <property type="evidence" value="ECO:0007669"/>
    <property type="project" value="TreeGrafter"/>
</dbReference>
<dbReference type="CDD" id="cd04732">
    <property type="entry name" value="HisA"/>
    <property type="match status" value="1"/>
</dbReference>
<dbReference type="FunFam" id="3.20.20.70:FF:000009">
    <property type="entry name" value="1-(5-phosphoribosyl)-5-[(5-phosphoribosylamino)methylideneamino] imidazole-4-carboxamide isomerase"/>
    <property type="match status" value="1"/>
</dbReference>
<dbReference type="Gene3D" id="3.20.20.70">
    <property type="entry name" value="Aldolase class I"/>
    <property type="match status" value="1"/>
</dbReference>
<dbReference type="HAMAP" id="MF_01014">
    <property type="entry name" value="HisA"/>
    <property type="match status" value="1"/>
</dbReference>
<dbReference type="InterPro" id="IPR013785">
    <property type="entry name" value="Aldolase_TIM"/>
</dbReference>
<dbReference type="InterPro" id="IPR006062">
    <property type="entry name" value="His_biosynth"/>
</dbReference>
<dbReference type="InterPro" id="IPR006063">
    <property type="entry name" value="HisA_bact_arch"/>
</dbReference>
<dbReference type="InterPro" id="IPR044524">
    <property type="entry name" value="Isoase_HisA-like"/>
</dbReference>
<dbReference type="InterPro" id="IPR023016">
    <property type="entry name" value="Isoase_HisA-like_bact"/>
</dbReference>
<dbReference type="InterPro" id="IPR011060">
    <property type="entry name" value="RibuloseP-bd_barrel"/>
</dbReference>
<dbReference type="NCBIfam" id="TIGR00007">
    <property type="entry name" value="1-(5-phosphoribosyl)-5-[(5-phosphoribosylamino)methylideneamino]imidazole-4-carboxamide isomerase"/>
    <property type="match status" value="1"/>
</dbReference>
<dbReference type="PANTHER" id="PTHR43090">
    <property type="entry name" value="1-(5-PHOSPHORIBOSYL)-5-[(5-PHOSPHORIBOSYLAMINO)METHYLIDENEAMINO] IMIDAZOLE-4-CARBOXAMIDE ISOMERASE"/>
    <property type="match status" value="1"/>
</dbReference>
<dbReference type="PANTHER" id="PTHR43090:SF2">
    <property type="entry name" value="1-(5-PHOSPHORIBOSYL)-5-[(5-PHOSPHORIBOSYLAMINO)METHYLIDENEAMINO] IMIDAZOLE-4-CARBOXAMIDE ISOMERASE"/>
    <property type="match status" value="1"/>
</dbReference>
<dbReference type="Pfam" id="PF00977">
    <property type="entry name" value="His_biosynth"/>
    <property type="match status" value="1"/>
</dbReference>
<dbReference type="SUPFAM" id="SSF51366">
    <property type="entry name" value="Ribulose-phoshate binding barrel"/>
    <property type="match status" value="1"/>
</dbReference>
<feature type="chain" id="PRO_1000084105" description="1-(5-phosphoribosyl)-5-[(5-phosphoribosylamino)methylideneamino] imidazole-4-carboxamide isomerase">
    <location>
        <begin position="1"/>
        <end position="245"/>
    </location>
</feature>
<feature type="active site" description="Proton acceptor" evidence="1">
    <location>
        <position position="8"/>
    </location>
</feature>
<feature type="active site" description="Proton donor" evidence="1">
    <location>
        <position position="130"/>
    </location>
</feature>
<organism>
    <name type="scientific">Pseudomonas putida (strain GB-1)</name>
    <dbReference type="NCBI Taxonomy" id="76869"/>
    <lineage>
        <taxon>Bacteria</taxon>
        <taxon>Pseudomonadati</taxon>
        <taxon>Pseudomonadota</taxon>
        <taxon>Gammaproteobacteria</taxon>
        <taxon>Pseudomonadales</taxon>
        <taxon>Pseudomonadaceae</taxon>
        <taxon>Pseudomonas</taxon>
    </lineage>
</organism>
<name>HIS4_PSEPG</name>
<protein>
    <recommendedName>
        <fullName evidence="1">1-(5-phosphoribosyl)-5-[(5-phosphoribosylamino)methylideneamino] imidazole-4-carboxamide isomerase</fullName>
        <ecNumber evidence="1">5.3.1.16</ecNumber>
    </recommendedName>
    <alternativeName>
        <fullName evidence="1">Phosphoribosylformimino-5-aminoimidazole carboxamide ribotide isomerase</fullName>
    </alternativeName>
</protein>
<evidence type="ECO:0000255" key="1">
    <source>
        <dbReference type="HAMAP-Rule" id="MF_01014"/>
    </source>
</evidence>
<accession>B0KI44</accession>
<gene>
    <name evidence="1" type="primary">hisA</name>
    <name type="ordered locus">PputGB1_0317</name>
</gene>
<keyword id="KW-0028">Amino-acid biosynthesis</keyword>
<keyword id="KW-0963">Cytoplasm</keyword>
<keyword id="KW-0368">Histidine biosynthesis</keyword>
<keyword id="KW-0413">Isomerase</keyword>
<comment type="catalytic activity">
    <reaction evidence="1">
        <text>1-(5-phospho-beta-D-ribosyl)-5-[(5-phospho-beta-D-ribosylamino)methylideneamino]imidazole-4-carboxamide = 5-[(5-phospho-1-deoxy-D-ribulos-1-ylimino)methylamino]-1-(5-phospho-beta-D-ribosyl)imidazole-4-carboxamide</text>
        <dbReference type="Rhea" id="RHEA:15469"/>
        <dbReference type="ChEBI" id="CHEBI:58435"/>
        <dbReference type="ChEBI" id="CHEBI:58525"/>
        <dbReference type="EC" id="5.3.1.16"/>
    </reaction>
</comment>
<comment type="pathway">
    <text evidence="1">Amino-acid biosynthesis; L-histidine biosynthesis; L-histidine from 5-phospho-alpha-D-ribose 1-diphosphate: step 4/9.</text>
</comment>
<comment type="subcellular location">
    <subcellularLocation>
        <location evidence="1">Cytoplasm</location>
    </subcellularLocation>
</comment>
<comment type="similarity">
    <text evidence="1">Belongs to the HisA/HisF family.</text>
</comment>
<sequence>MLIIPAIDLKDGACVRLRQGRMEDSTVFSDDPVSMAAKWVEGGCRRLHLVDLNGAFEGQPVNGEVVTAIAKRYPTLPIQIGGGIRSLDTIEHYVKAGVSYVIIGTKAVKQPEFVAEACKAFPGKVIVGLDAKDGFVATDGWAEVSSVQVIDLAKRFEADGVSAIVYTDIAKDGMMQGCNVPFTKALAEATRIPVIASGGIHNLGDIKALLDAKAPGIVGAITGRAIYEGTLDVAEAQAFCDNYQG</sequence>
<proteinExistence type="inferred from homology"/>
<reference key="1">
    <citation type="submission" date="2008-01" db="EMBL/GenBank/DDBJ databases">
        <title>Complete sequence of Pseudomonas putida GB-1.</title>
        <authorList>
            <consortium name="US DOE Joint Genome Institute"/>
            <person name="Copeland A."/>
            <person name="Lucas S."/>
            <person name="Lapidus A."/>
            <person name="Barry K."/>
            <person name="Glavina del Rio T."/>
            <person name="Dalin E."/>
            <person name="Tice H."/>
            <person name="Pitluck S."/>
            <person name="Bruce D."/>
            <person name="Goodwin L."/>
            <person name="Chertkov O."/>
            <person name="Brettin T."/>
            <person name="Detter J.C."/>
            <person name="Han C."/>
            <person name="Kuske C.R."/>
            <person name="Schmutz J."/>
            <person name="Larimer F."/>
            <person name="Land M."/>
            <person name="Hauser L."/>
            <person name="Kyrpides N."/>
            <person name="Kim E."/>
            <person name="McCarthy J.K."/>
            <person name="Richardson P."/>
        </authorList>
    </citation>
    <scope>NUCLEOTIDE SEQUENCE [LARGE SCALE GENOMIC DNA]</scope>
    <source>
        <strain>GB-1</strain>
    </source>
</reference>